<accession>P48404</accession>
<dbReference type="EC" id="2.3.1.74"/>
<dbReference type="EMBL" id="U15953">
    <property type="protein sequence ID" value="AAC49035.1"/>
    <property type="molecule type" value="Genomic_DNA"/>
</dbReference>
<dbReference type="SMR" id="P48404"/>
<dbReference type="UniPathway" id="UPA00154"/>
<dbReference type="GO" id="GO:0016210">
    <property type="term" value="F:naringenin-chalcone synthase activity"/>
    <property type="evidence" value="ECO:0007669"/>
    <property type="project" value="UniProtKB-EC"/>
</dbReference>
<dbReference type="GO" id="GO:0009813">
    <property type="term" value="P:flavonoid biosynthetic process"/>
    <property type="evidence" value="ECO:0007669"/>
    <property type="project" value="UniProtKB-UniPathway"/>
</dbReference>
<dbReference type="GO" id="GO:0030639">
    <property type="term" value="P:polyketide biosynthetic process"/>
    <property type="evidence" value="ECO:0007669"/>
    <property type="project" value="TreeGrafter"/>
</dbReference>
<dbReference type="CDD" id="cd00831">
    <property type="entry name" value="CHS_like"/>
    <property type="match status" value="1"/>
</dbReference>
<dbReference type="FunFam" id="3.40.47.10:FF:000014">
    <property type="entry name" value="Chalcone synthase 1"/>
    <property type="match status" value="1"/>
</dbReference>
<dbReference type="FunFam" id="3.40.47.10:FF:000025">
    <property type="entry name" value="Chalcone synthase 2"/>
    <property type="match status" value="1"/>
</dbReference>
<dbReference type="Gene3D" id="3.40.47.10">
    <property type="match status" value="2"/>
</dbReference>
<dbReference type="InterPro" id="IPR012328">
    <property type="entry name" value="Chalcone/stilbene_synt_C"/>
</dbReference>
<dbReference type="InterPro" id="IPR001099">
    <property type="entry name" value="Chalcone/stilbene_synt_N"/>
</dbReference>
<dbReference type="InterPro" id="IPR018088">
    <property type="entry name" value="Chalcone/stilbene_synthase_AS"/>
</dbReference>
<dbReference type="InterPro" id="IPR011141">
    <property type="entry name" value="Polyketide_synthase_type-III"/>
</dbReference>
<dbReference type="InterPro" id="IPR016039">
    <property type="entry name" value="Thiolase-like"/>
</dbReference>
<dbReference type="PANTHER" id="PTHR11877:SF104">
    <property type="entry name" value="CHALCONE SYNTHASE"/>
    <property type="match status" value="1"/>
</dbReference>
<dbReference type="PANTHER" id="PTHR11877">
    <property type="entry name" value="HYDROXYMETHYLGLUTARYL-COA SYNTHASE"/>
    <property type="match status" value="1"/>
</dbReference>
<dbReference type="Pfam" id="PF02797">
    <property type="entry name" value="Chal_sti_synt_C"/>
    <property type="match status" value="1"/>
</dbReference>
<dbReference type="Pfam" id="PF00195">
    <property type="entry name" value="Chal_sti_synt_N"/>
    <property type="match status" value="1"/>
</dbReference>
<dbReference type="PIRSF" id="PIRSF000451">
    <property type="entry name" value="PKS_III"/>
    <property type="match status" value="1"/>
</dbReference>
<dbReference type="SUPFAM" id="SSF53901">
    <property type="entry name" value="Thiolase-like"/>
    <property type="match status" value="2"/>
</dbReference>
<dbReference type="PROSITE" id="PS00441">
    <property type="entry name" value="CHALCONE_SYNTH"/>
    <property type="match status" value="1"/>
</dbReference>
<comment type="function">
    <text>The primary product of this enzyme is 4,2',4',6'-tetrahydroxychalcone (also termed naringenin-chalcone or chalcone) which can under specific conditions spontaneously isomerize into naringenin.</text>
</comment>
<comment type="catalytic activity">
    <reaction evidence="1">
        <text>(E)-4-coumaroyl-CoA + 3 malonyl-CoA + 3 H(+) = 2',4,4',6'-tetrahydroxychalcone + 3 CO2 + 4 CoA</text>
        <dbReference type="Rhea" id="RHEA:11128"/>
        <dbReference type="ChEBI" id="CHEBI:15378"/>
        <dbReference type="ChEBI" id="CHEBI:15413"/>
        <dbReference type="ChEBI" id="CHEBI:16526"/>
        <dbReference type="ChEBI" id="CHEBI:57287"/>
        <dbReference type="ChEBI" id="CHEBI:57384"/>
        <dbReference type="ChEBI" id="CHEBI:85008"/>
        <dbReference type="EC" id="2.3.1.74"/>
    </reaction>
</comment>
<comment type="pathway">
    <text>Secondary metabolite biosynthesis; flavonoid biosynthesis.</text>
</comment>
<comment type="similarity">
    <text evidence="2">Belongs to the thiolase-like superfamily. Chalcone/stilbene synthases family.</text>
</comment>
<feature type="chain" id="PRO_0000216000" description="Chalcone synthase B">
    <location>
        <begin position="1"/>
        <end position="366" status="greater than"/>
    </location>
</feature>
<feature type="active site" evidence="1">
    <location>
        <position position="172"/>
    </location>
</feature>
<feature type="non-terminal residue">
    <location>
        <position position="366"/>
    </location>
</feature>
<name>CHSB_IPOTR</name>
<keyword id="KW-0012">Acyltransferase</keyword>
<keyword id="KW-0284">Flavonoid biosynthesis</keyword>
<keyword id="KW-0808">Transferase</keyword>
<sequence>MSTTVTVLTDTWGRRAKRFEIEGYAKILAIGTATPANWVDQTTYPDFYFRITNSQHLLEHKEKFRRICNKSKIRKRHLVLTEELLQKNPSLCTYNETSLNTRQDILVSEVPKLGKEAAMKAIKEWGRPISEITHLVFCTTSGVDMPGADFRLTKLLGLNSSVKRLMMYQQGCNAGAAMLRLAKDLAESNKGGRILVVCSEITINIFRGPSLEQDDNLLAQCLFGDGSAAMIVGTDPRPDLETPLFELVSSAQTIVPNTDSHLKLTLREMGLTFHCSRAVPSVLAENVEDCLVKAFEPYGISDWNSIFWVFHPGGNAIVDRVEERLGLGAQRFRASRDVLSEYGNLTSACVLFILDEVRNKSKKNEQ</sequence>
<organism>
    <name type="scientific">Ipomoea triloba</name>
    <name type="common">Trilobed morning glory</name>
    <dbReference type="NCBI Taxonomy" id="35885"/>
    <lineage>
        <taxon>Eukaryota</taxon>
        <taxon>Viridiplantae</taxon>
        <taxon>Streptophyta</taxon>
        <taxon>Embryophyta</taxon>
        <taxon>Tracheophyta</taxon>
        <taxon>Spermatophyta</taxon>
        <taxon>Magnoliopsida</taxon>
        <taxon>eudicotyledons</taxon>
        <taxon>Gunneridae</taxon>
        <taxon>Pentapetalae</taxon>
        <taxon>asterids</taxon>
        <taxon>lamiids</taxon>
        <taxon>Solanales</taxon>
        <taxon>Convolvulaceae</taxon>
        <taxon>Ipomoeeae</taxon>
        <taxon>Ipomoea</taxon>
    </lineage>
</organism>
<proteinExistence type="inferred from homology"/>
<evidence type="ECO:0000255" key="1">
    <source>
        <dbReference type="PROSITE-ProRule" id="PRU10023"/>
    </source>
</evidence>
<evidence type="ECO:0000305" key="2"/>
<reference key="1">
    <citation type="journal article" date="1995" name="Proc. Natl. Acad. Sci. U.S.A.">
        <title>Evolution of the chalcone synthase gene family in the genus Ipomoea.</title>
        <authorList>
            <person name="Durbin M.L."/>
            <person name="Learn G.H."/>
            <person name="Huttley G.A."/>
            <person name="Clegg M.T."/>
        </authorList>
    </citation>
    <scope>NUCLEOTIDE SEQUENCE [GENOMIC DNA]</scope>
</reference>
<gene>
    <name type="primary">CHSB</name>
</gene>
<protein>
    <recommendedName>
        <fullName>Chalcone synthase B</fullName>
        <ecNumber>2.3.1.74</ecNumber>
    </recommendedName>
    <alternativeName>
        <fullName>Naringenin-chalcone synthase B</fullName>
        <shortName>CHS-B</shortName>
    </alternativeName>
</protein>